<proteinExistence type="inferred from homology"/>
<gene>
    <name evidence="1" type="primary">rpmE2</name>
    <name type="ordered locus">MCCL_1774</name>
</gene>
<organism>
    <name type="scientific">Macrococcus caseolyticus (strain JCSC5402)</name>
    <name type="common">Macrococcoides caseolyticum</name>
    <dbReference type="NCBI Taxonomy" id="458233"/>
    <lineage>
        <taxon>Bacteria</taxon>
        <taxon>Bacillati</taxon>
        <taxon>Bacillota</taxon>
        <taxon>Bacilli</taxon>
        <taxon>Bacillales</taxon>
        <taxon>Staphylococcaceae</taxon>
        <taxon>Macrococcoides</taxon>
    </lineage>
</organism>
<feature type="chain" id="PRO_1000176989" description="Large ribosomal subunit protein bL31B">
    <location>
        <begin position="1"/>
        <end position="85"/>
    </location>
</feature>
<protein>
    <recommendedName>
        <fullName evidence="1">Large ribosomal subunit protein bL31B</fullName>
    </recommendedName>
    <alternativeName>
        <fullName evidence="2">50S ribosomal protein L31 type B</fullName>
    </alternativeName>
</protein>
<dbReference type="EMBL" id="AP009484">
    <property type="protein sequence ID" value="BAH18481.1"/>
    <property type="molecule type" value="Genomic_DNA"/>
</dbReference>
<dbReference type="RefSeq" id="WP_015912273.1">
    <property type="nucleotide sequence ID" value="NC_011999.1"/>
</dbReference>
<dbReference type="SMR" id="B9E8G3"/>
<dbReference type="STRING" id="458233.MCCL_1774"/>
<dbReference type="KEGG" id="mcl:MCCL_1774"/>
<dbReference type="eggNOG" id="COG0254">
    <property type="taxonomic scope" value="Bacteria"/>
</dbReference>
<dbReference type="HOGENOM" id="CLU_114306_2_2_9"/>
<dbReference type="OrthoDB" id="9803251at2"/>
<dbReference type="Proteomes" id="UP000001383">
    <property type="component" value="Chromosome"/>
</dbReference>
<dbReference type="GO" id="GO:1990904">
    <property type="term" value="C:ribonucleoprotein complex"/>
    <property type="evidence" value="ECO:0007669"/>
    <property type="project" value="UniProtKB-KW"/>
</dbReference>
<dbReference type="GO" id="GO:0005840">
    <property type="term" value="C:ribosome"/>
    <property type="evidence" value="ECO:0007669"/>
    <property type="project" value="UniProtKB-KW"/>
</dbReference>
<dbReference type="GO" id="GO:0003735">
    <property type="term" value="F:structural constituent of ribosome"/>
    <property type="evidence" value="ECO:0007669"/>
    <property type="project" value="InterPro"/>
</dbReference>
<dbReference type="GO" id="GO:0006412">
    <property type="term" value="P:translation"/>
    <property type="evidence" value="ECO:0007669"/>
    <property type="project" value="UniProtKB-UniRule"/>
</dbReference>
<dbReference type="Gene3D" id="4.10.830.30">
    <property type="entry name" value="Ribosomal protein L31"/>
    <property type="match status" value="1"/>
</dbReference>
<dbReference type="HAMAP" id="MF_00502">
    <property type="entry name" value="Ribosomal_bL31_2"/>
    <property type="match status" value="1"/>
</dbReference>
<dbReference type="InterPro" id="IPR034704">
    <property type="entry name" value="Ribosomal_bL28/bL31-like_sf"/>
</dbReference>
<dbReference type="InterPro" id="IPR002150">
    <property type="entry name" value="Ribosomal_bL31"/>
</dbReference>
<dbReference type="InterPro" id="IPR027493">
    <property type="entry name" value="Ribosomal_bL31_B"/>
</dbReference>
<dbReference type="InterPro" id="IPR042105">
    <property type="entry name" value="Ribosomal_bL31_sf"/>
</dbReference>
<dbReference type="NCBIfam" id="TIGR00105">
    <property type="entry name" value="L31"/>
    <property type="match status" value="1"/>
</dbReference>
<dbReference type="NCBIfam" id="NF002462">
    <property type="entry name" value="PRK01678.1"/>
    <property type="match status" value="1"/>
</dbReference>
<dbReference type="PANTHER" id="PTHR33280">
    <property type="entry name" value="50S RIBOSOMAL PROTEIN L31, CHLOROPLASTIC"/>
    <property type="match status" value="1"/>
</dbReference>
<dbReference type="PANTHER" id="PTHR33280:SF1">
    <property type="entry name" value="LARGE RIBOSOMAL SUBUNIT PROTEIN BL31C"/>
    <property type="match status" value="1"/>
</dbReference>
<dbReference type="Pfam" id="PF01197">
    <property type="entry name" value="Ribosomal_L31"/>
    <property type="match status" value="1"/>
</dbReference>
<dbReference type="PRINTS" id="PR01249">
    <property type="entry name" value="RIBOSOMALL31"/>
</dbReference>
<dbReference type="SUPFAM" id="SSF143800">
    <property type="entry name" value="L28p-like"/>
    <property type="match status" value="1"/>
</dbReference>
<dbReference type="PROSITE" id="PS01143">
    <property type="entry name" value="RIBOSOMAL_L31"/>
    <property type="match status" value="1"/>
</dbReference>
<comment type="subunit">
    <text evidence="1">Part of the 50S ribosomal subunit.</text>
</comment>
<comment type="similarity">
    <text evidence="1">Belongs to the bacterial ribosomal protein bL31 family. Type B subfamily.</text>
</comment>
<sequence>MKQGIHPDYHKVIFLDSTTDFKFLSGSTRTSSETMTWEDGNEYPVIRLDISSDSHPFYTGRQKFASADGRVERFNKKFGFKSSNE</sequence>
<accession>B9E8G3</accession>
<evidence type="ECO:0000255" key="1">
    <source>
        <dbReference type="HAMAP-Rule" id="MF_00502"/>
    </source>
</evidence>
<evidence type="ECO:0000305" key="2"/>
<reference key="1">
    <citation type="journal article" date="2009" name="J. Bacteriol.">
        <title>Complete genome sequence of Macrococcus caseolyticus strain JCSCS5402, reflecting the ancestral genome of the human-pathogenic staphylococci.</title>
        <authorList>
            <person name="Baba T."/>
            <person name="Kuwahara-Arai K."/>
            <person name="Uchiyama I."/>
            <person name="Takeuchi F."/>
            <person name="Ito T."/>
            <person name="Hiramatsu K."/>
        </authorList>
    </citation>
    <scope>NUCLEOTIDE SEQUENCE [LARGE SCALE GENOMIC DNA]</scope>
    <source>
        <strain>JCSC5402</strain>
    </source>
</reference>
<name>RL31B_MACCJ</name>
<keyword id="KW-1185">Reference proteome</keyword>
<keyword id="KW-0687">Ribonucleoprotein</keyword>
<keyword id="KW-0689">Ribosomal protein</keyword>